<name>POTE_ECOLI</name>
<sequence>MSQAKSNKMGVVQLTILTMVNMMGSGIIMLPTKLAEVGTISIISWLVTAVGSMALAWAFAKCGMFSRKSGGMGGYAEYAFGKSGNFMANYTYGVSLLIANVAIAISAVGYGTELLGASLSPVQIGLATIGVLWICTVANFGGARITGQISSITVWGVIIPVVGLCIIGWFWFSPTLYVDSWNPHHAPFFSAVGSSIAMTLWAFLGLESACANTDVVENPERNVPIAVLGGTLGAAVIYIVSTNVIAGIVPNMELANSTAPFGLAFAQMFTPEVGKVIMALMVMSCCGSLLGWQFTIAQVFKSSSDEGYFPKIFSRVTKVDAPVQGMLTIVIIQSGLALMTISPSLNSQFNVLVNLAVVTNIIPYILSMAALVIIQKVANVPPSKAKVANFVAFVGAMYSFYALYSSGEEAMLYGSIVTFLGWTLYGLVSPRFELKNKHG</sequence>
<keyword id="KW-0029">Amino-acid transport</keyword>
<keyword id="KW-0050">Antiport</keyword>
<keyword id="KW-0997">Cell inner membrane</keyword>
<keyword id="KW-1003">Cell membrane</keyword>
<keyword id="KW-0472">Membrane</keyword>
<keyword id="KW-1185">Reference proteome</keyword>
<keyword id="KW-0769">Symport</keyword>
<keyword id="KW-0812">Transmembrane</keyword>
<keyword id="KW-1133">Transmembrane helix</keyword>
<keyword id="KW-0813">Transport</keyword>
<protein>
    <recommendedName>
        <fullName evidence="1 9">Putrescine transporter PotE</fullName>
    </recommendedName>
    <alternativeName>
        <fullName evidence="1 9">Putrescine-proton symporter / putrescine-ornithine antiporter</fullName>
    </alternativeName>
</protein>
<accession>P0AAF1</accession>
<accession>P24170</accession>
<evidence type="ECO:0000255" key="1">
    <source>
        <dbReference type="HAMAP-Rule" id="MF_02073"/>
    </source>
</evidence>
<evidence type="ECO:0000269" key="2">
    <source>
    </source>
</evidence>
<evidence type="ECO:0000269" key="3">
    <source>
    </source>
</evidence>
<evidence type="ECO:0000269" key="4">
    <source>
    </source>
</evidence>
<evidence type="ECO:0000269" key="5">
    <source>
    </source>
</evidence>
<evidence type="ECO:0000269" key="6">
    <source>
    </source>
</evidence>
<evidence type="ECO:0000303" key="7">
    <source>
    </source>
</evidence>
<evidence type="ECO:0000303" key="8">
    <source>
    </source>
</evidence>
<evidence type="ECO:0000305" key="9"/>
<evidence type="ECO:0000305" key="10">
    <source>
    </source>
</evidence>
<organism>
    <name type="scientific">Escherichia coli (strain K12)</name>
    <dbReference type="NCBI Taxonomy" id="83333"/>
    <lineage>
        <taxon>Bacteria</taxon>
        <taxon>Pseudomonadati</taxon>
        <taxon>Pseudomonadota</taxon>
        <taxon>Gammaproteobacteria</taxon>
        <taxon>Enterobacterales</taxon>
        <taxon>Enterobacteriaceae</taxon>
        <taxon>Escherichia</taxon>
    </lineage>
</organism>
<proteinExistence type="evidence at protein level"/>
<dbReference type="EMBL" id="M64495">
    <property type="protein sequence ID" value="AAA62786.1"/>
    <property type="molecule type" value="Genomic_DNA"/>
</dbReference>
<dbReference type="EMBL" id="U00096">
    <property type="protein sequence ID" value="AAC73786.1"/>
    <property type="molecule type" value="Genomic_DNA"/>
</dbReference>
<dbReference type="EMBL" id="AP009048">
    <property type="protein sequence ID" value="BAA35348.1"/>
    <property type="molecule type" value="Genomic_DNA"/>
</dbReference>
<dbReference type="PIR" id="B40839">
    <property type="entry name" value="B40839"/>
</dbReference>
<dbReference type="RefSeq" id="NP_415219.1">
    <property type="nucleotide sequence ID" value="NC_000913.3"/>
</dbReference>
<dbReference type="RefSeq" id="WP_000075845.1">
    <property type="nucleotide sequence ID" value="NZ_STEB01000044.1"/>
</dbReference>
<dbReference type="SMR" id="P0AAF1"/>
<dbReference type="BioGRID" id="4261131">
    <property type="interactions" value="17"/>
</dbReference>
<dbReference type="FunCoup" id="P0AAF1">
    <property type="interactions" value="44"/>
</dbReference>
<dbReference type="IntAct" id="P0AAF1">
    <property type="interactions" value="1"/>
</dbReference>
<dbReference type="STRING" id="511145.b0692"/>
<dbReference type="TCDB" id="2.A.3.2.1">
    <property type="family name" value="the amino acid-polyamine-organocation (apc) family"/>
</dbReference>
<dbReference type="PaxDb" id="511145-b0692"/>
<dbReference type="EnsemblBacteria" id="AAC73786">
    <property type="protein sequence ID" value="AAC73786"/>
    <property type="gene ID" value="b0692"/>
</dbReference>
<dbReference type="GeneID" id="93776795"/>
<dbReference type="GeneID" id="945422"/>
<dbReference type="KEGG" id="ecj:JW0679"/>
<dbReference type="KEGG" id="eco:b0692"/>
<dbReference type="KEGG" id="ecoc:C3026_03450"/>
<dbReference type="PATRIC" id="fig|1411691.4.peg.1584"/>
<dbReference type="EchoBASE" id="EB0746"/>
<dbReference type="eggNOG" id="COG0531">
    <property type="taxonomic scope" value="Bacteria"/>
</dbReference>
<dbReference type="HOGENOM" id="CLU_007946_1_0_6"/>
<dbReference type="InParanoid" id="P0AAF1"/>
<dbReference type="OMA" id="LYMFVNI"/>
<dbReference type="OrthoDB" id="3185104at2"/>
<dbReference type="PhylomeDB" id="P0AAF1"/>
<dbReference type="BioCyc" id="EcoCyc:POTE-MONOMER"/>
<dbReference type="BioCyc" id="MetaCyc:POTE-MONOMER"/>
<dbReference type="SABIO-RK" id="P0AAF1"/>
<dbReference type="PHI-base" id="PHI:9154"/>
<dbReference type="PRO" id="PR:P0AAF1"/>
<dbReference type="Proteomes" id="UP000000625">
    <property type="component" value="Chromosome"/>
</dbReference>
<dbReference type="GO" id="GO:0005886">
    <property type="term" value="C:plasma membrane"/>
    <property type="evidence" value="ECO:0000314"/>
    <property type="project" value="EcoCyc"/>
</dbReference>
<dbReference type="GO" id="GO:0015496">
    <property type="term" value="F:putrescine:ornithine antiporter activity"/>
    <property type="evidence" value="ECO:0000314"/>
    <property type="project" value="EcoCyc"/>
</dbReference>
<dbReference type="GO" id="GO:0015293">
    <property type="term" value="F:symporter activity"/>
    <property type="evidence" value="ECO:0000314"/>
    <property type="project" value="EcoCyc"/>
</dbReference>
<dbReference type="GO" id="GO:0015847">
    <property type="term" value="P:putrescine transport"/>
    <property type="evidence" value="ECO:0000314"/>
    <property type="project" value="EcoCyc"/>
</dbReference>
<dbReference type="FunFam" id="1.20.1740.10:FF:000014">
    <property type="entry name" value="Putrescine transporter PotE"/>
    <property type="match status" value="1"/>
</dbReference>
<dbReference type="Gene3D" id="1.20.1740.10">
    <property type="entry name" value="Amino acid/polyamine transporter I"/>
    <property type="match status" value="1"/>
</dbReference>
<dbReference type="HAMAP" id="MF_02073">
    <property type="entry name" value="Putrescine_transp"/>
    <property type="match status" value="1"/>
</dbReference>
<dbReference type="InterPro" id="IPR002293">
    <property type="entry name" value="AA/rel_permease1"/>
</dbReference>
<dbReference type="InterPro" id="IPR004754">
    <property type="entry name" value="Amino_acid_antiprt"/>
</dbReference>
<dbReference type="InterPro" id="IPR050367">
    <property type="entry name" value="APC_superfamily"/>
</dbReference>
<dbReference type="InterPro" id="IPR027566">
    <property type="entry name" value="Symport/antiport_PotE"/>
</dbReference>
<dbReference type="NCBIfam" id="TIGR00905">
    <property type="entry name" value="2A0302"/>
    <property type="match status" value="1"/>
</dbReference>
<dbReference type="NCBIfam" id="TIGR04299">
    <property type="entry name" value="antiport_PotE"/>
    <property type="match status" value="1"/>
</dbReference>
<dbReference type="NCBIfam" id="NF007938">
    <property type="entry name" value="PRK10655.1"/>
    <property type="match status" value="1"/>
</dbReference>
<dbReference type="PANTHER" id="PTHR42770">
    <property type="entry name" value="AMINO ACID TRANSPORTER-RELATED"/>
    <property type="match status" value="1"/>
</dbReference>
<dbReference type="PANTHER" id="PTHR42770:SF6">
    <property type="entry name" value="PUTRESCINE TRANSPORTER POTE"/>
    <property type="match status" value="1"/>
</dbReference>
<dbReference type="Pfam" id="PF13520">
    <property type="entry name" value="AA_permease_2"/>
    <property type="match status" value="1"/>
</dbReference>
<dbReference type="PIRSF" id="PIRSF006060">
    <property type="entry name" value="AA_transporter"/>
    <property type="match status" value="1"/>
</dbReference>
<comment type="function">
    <text evidence="1 3 5 6">Catalyzes both the uptake and excretion of putrescine. The uptake of putrescine is dependent on the membrane potential and the excretion involves putrescine-ornithine antiporter activity.</text>
</comment>
<comment type="catalytic activity">
    <reaction evidence="1 6">
        <text>putrescine(in) + H(+)(in) = putrescine(out) + H(+)(out)</text>
        <dbReference type="Rhea" id="RHEA:28891"/>
        <dbReference type="ChEBI" id="CHEBI:15378"/>
        <dbReference type="ChEBI" id="CHEBI:326268"/>
    </reaction>
    <physiologicalReaction direction="right-to-left" evidence="1 3 6">
        <dbReference type="Rhea" id="RHEA:28893"/>
    </physiologicalReaction>
</comment>
<comment type="catalytic activity">
    <reaction evidence="1 3 6">
        <text>putrescine(in) + L-ornithine(out) = putrescine(out) + L-ornithine(in)</text>
        <dbReference type="Rhea" id="RHEA:28827"/>
        <dbReference type="ChEBI" id="CHEBI:46911"/>
        <dbReference type="ChEBI" id="CHEBI:326268"/>
    </reaction>
    <physiologicalReaction direction="left-to-right" evidence="1 3 6">
        <dbReference type="Rhea" id="RHEA:28828"/>
    </physiologicalReaction>
</comment>
<comment type="activity regulation">
    <text evidence="3 6">Uptake activity, but not antiporter activity, is inhibited by CCCP and N-ethylmaleimide (NEM). Uptake of putrescine is inhibited by high concentrations of ornithine.</text>
</comment>
<comment type="biophysicochemical properties">
    <kinetics>
        <KM evidence="6">1.8 uM for putrescine (for uptake activity)</KM>
        <KM evidence="3 6">73 uM for putrescine (for antiporter activity)</KM>
        <KM evidence="6">108 uM for ornithine (for antiporter activity)</KM>
        <Vmax evidence="3">0.82 nmol/min/mg enzyme for antiporter activity</Vmax>
    </kinetics>
    <phDependence>
        <text evidence="6">Optimum pH is 6.5 for uptake activity. Optimum pH is 9.2 for antiporter activity.</text>
    </phDependence>
</comment>
<comment type="subunit">
    <text evidence="2">Monomer.</text>
</comment>
<comment type="subcellular location">
    <subcellularLocation>
        <location evidence="1 4 6 10">Cell inner membrane</location>
        <topology evidence="1">Multi-pass membrane protein</topology>
    </subcellularLocation>
</comment>
<comment type="induction">
    <text evidence="10">Induced at low environmental pH. Part of the speFL-speF-potE operon.</text>
</comment>
<comment type="similarity">
    <text evidence="1 9">Belongs to the amino acid-polyamine-organocation (APC) superfamily. Basic amino acid/polyamine antiporter (APA) (TC 2.A.3.2) family.</text>
</comment>
<gene>
    <name evidence="1 7 8" type="primary">potE</name>
    <name type="ordered locus">b0692</name>
    <name type="ordered locus">JW0679</name>
</gene>
<feature type="chain" id="PRO_0000054250" description="Putrescine transporter PotE">
    <location>
        <begin position="1"/>
        <end position="439"/>
    </location>
</feature>
<feature type="topological domain" description="Cytoplasmic" evidence="6">
    <location>
        <begin position="1"/>
        <end position="9"/>
    </location>
</feature>
<feature type="transmembrane region" description="Helical" evidence="1">
    <location>
        <begin position="10"/>
        <end position="30"/>
    </location>
</feature>
<feature type="topological domain" description="Periplasmic" evidence="6">
    <location>
        <begin position="31"/>
        <end position="39"/>
    </location>
</feature>
<feature type="transmembrane region" description="Helical" evidence="1">
    <location>
        <begin position="40"/>
        <end position="60"/>
    </location>
</feature>
<feature type="topological domain" description="Cytoplasmic" evidence="6">
    <location>
        <begin position="61"/>
        <end position="90"/>
    </location>
</feature>
<feature type="transmembrane region" description="Helical" evidence="1">
    <location>
        <begin position="91"/>
        <end position="111"/>
    </location>
</feature>
<feature type="topological domain" description="Periplasmic" evidence="6">
    <location>
        <begin position="112"/>
        <end position="113"/>
    </location>
</feature>
<feature type="transmembrane region" description="Helical" evidence="1">
    <location>
        <begin position="114"/>
        <end position="134"/>
    </location>
</feature>
<feature type="topological domain" description="Cytoplasmic" evidence="6">
    <location>
        <begin position="135"/>
        <end position="151"/>
    </location>
</feature>
<feature type="transmembrane region" description="Helical" evidence="1">
    <location>
        <begin position="152"/>
        <end position="172"/>
    </location>
</feature>
<feature type="topological domain" description="Periplasmic" evidence="6">
    <location>
        <begin position="173"/>
        <end position="185"/>
    </location>
</feature>
<feature type="transmembrane region" description="Helical" evidence="1">
    <location>
        <begin position="186"/>
        <end position="206"/>
    </location>
</feature>
<feature type="topological domain" description="Cytoplasmic" evidence="6">
    <location>
        <begin position="207"/>
        <end position="224"/>
    </location>
</feature>
<feature type="transmembrane region" description="Helical" evidence="1">
    <location>
        <begin position="225"/>
        <end position="245"/>
    </location>
</feature>
<feature type="topological domain" description="Periplasmic" evidence="6">
    <location>
        <begin position="246"/>
        <end position="275"/>
    </location>
</feature>
<feature type="transmembrane region" description="Helical" evidence="1">
    <location>
        <begin position="276"/>
        <end position="296"/>
    </location>
</feature>
<feature type="topological domain" description="Cytoplasmic" evidence="6">
    <location>
        <begin position="297"/>
        <end position="320"/>
    </location>
</feature>
<feature type="transmembrane region" description="Helical" evidence="1">
    <location>
        <begin position="321"/>
        <end position="341"/>
    </location>
</feature>
<feature type="topological domain" description="Periplasmic" evidence="6">
    <location>
        <begin position="342"/>
        <end position="353"/>
    </location>
</feature>
<feature type="transmembrane region" description="Helical" evidence="1">
    <location>
        <begin position="354"/>
        <end position="374"/>
    </location>
</feature>
<feature type="topological domain" description="Cytoplasmic" evidence="6">
    <location>
        <begin position="375"/>
        <end position="386"/>
    </location>
</feature>
<feature type="transmembrane region" description="Helical" evidence="1">
    <location>
        <begin position="387"/>
        <end position="407"/>
    </location>
</feature>
<feature type="topological domain" description="Periplasmic" evidence="6">
    <location>
        <begin position="408"/>
        <end position="409"/>
    </location>
</feature>
<feature type="transmembrane region" description="Helical" evidence="1">
    <location>
        <begin position="410"/>
        <end position="430"/>
    </location>
</feature>
<feature type="topological domain" description="Cytoplasmic" evidence="4 6">
    <location>
        <begin position="431"/>
        <end position="439"/>
    </location>
</feature>
<feature type="mutagenesis site" description="Strong decrease in both uptake and excretion activities." evidence="2">
    <original>C</original>
    <variation>A</variation>
    <variation>T</variation>
    <location>
        <position position="62"/>
    </location>
</feature>
<feature type="mutagenesis site" description="Moderate decrease in both uptake and excretion activities." evidence="2">
    <original>C</original>
    <variation>S</variation>
    <location>
        <position position="62"/>
    </location>
</feature>
<feature type="mutagenesis site" description="Slight decrease in both uptake and excretion activities." evidence="2">
    <original>K</original>
    <variation>A</variation>
    <location>
        <position position="68"/>
    </location>
</feature>
<feature type="mutagenesis site" description="Strong decrease in both uptake and excretion activities." evidence="6">
    <original>E</original>
    <variation>A</variation>
    <variation>D</variation>
    <variation>N</variation>
    <variation>Q</variation>
    <location>
        <position position="77"/>
    </location>
</feature>
<feature type="mutagenesis site" description="Uptake activity decreases more than excretion activity." evidence="2">
    <original>Y</original>
    <variation>L</variation>
    <location>
        <position position="78"/>
    </location>
</feature>
<feature type="mutagenesis site" description="Slight decrease in both uptake and excretion activities." evidence="2">
    <original>K</original>
    <variation>A</variation>
    <location>
        <position position="82"/>
    </location>
</feature>
<feature type="mutagenesis site" description="Uptake activity decreases more than excretion activity." evidence="2">
    <original>Y</original>
    <variation>L</variation>
    <location>
        <position position="90"/>
    </location>
</feature>
<feature type="mutagenesis site" description="Moderate decrease in both uptake and excretion activities." evidence="2">
    <original>Y</original>
    <variation>L</variation>
    <location>
        <position position="92"/>
    </location>
</feature>
<feature type="mutagenesis site" description="Strong decrease in both uptake and excretion activities." evidence="2">
    <original>W</original>
    <variation>F</variation>
    <variation>L</variation>
    <variation>Y</variation>
    <location>
        <position position="201"/>
    </location>
</feature>
<feature type="mutagenesis site" description="Lack of both uptake and excretion activities." evidence="6">
    <original>E</original>
    <variation>A</variation>
    <variation>D</variation>
    <variation>N</variation>
    <variation>Q</variation>
    <location>
        <position position="207"/>
    </location>
</feature>
<feature type="mutagenesis site" description="Moderate decrease in both uptake and excretion activities." evidence="2">
    <original>C</original>
    <variation>A</variation>
    <location>
        <position position="210"/>
    </location>
</feature>
<feature type="mutagenesis site" description="Moderate decrease in both uptake and excretion activities." evidence="2">
    <original>C</original>
    <variation>A</variation>
    <location>
        <position position="285"/>
    </location>
</feature>
<feature type="mutagenesis site" description="Moderate decrease in both uptake and excretion activities." evidence="2">
    <original>C</original>
    <variation>A</variation>
    <location>
        <position position="286"/>
    </location>
</feature>
<feature type="mutagenesis site" description="Strong decrease in both uptake and excretion activities." evidence="2">
    <original>W</original>
    <variation>F</variation>
    <variation>L</variation>
    <variation>Y</variation>
    <location>
        <position position="292"/>
    </location>
</feature>
<feature type="mutagenesis site" description="Excretion activity decreases more than uptake activity." evidence="2">
    <original>K</original>
    <variation>A</variation>
    <location>
        <position position="301"/>
    </location>
</feature>
<feature type="mutagenesis site" description="Excretion activity decreases more than uptake activity." evidence="2">
    <original>Y</original>
    <variation>L</variation>
    <location>
        <position position="308"/>
    </location>
</feature>
<feature type="mutagenesis site" description="Uptake activity decreases more than excretion activity." evidence="2">
    <original>W</original>
    <variation>L</variation>
    <location>
        <position position="422"/>
    </location>
</feature>
<feature type="mutagenesis site" description="Moderate decrease in both uptake and excretion activities." evidence="2">
    <original>Y</original>
    <variation>F</variation>
    <location>
        <position position="425"/>
    </location>
</feature>
<feature type="mutagenesis site" description="Strong decrease in both uptake and excretion activities." evidence="2">
    <original>Y</original>
    <variation>L</variation>
    <location>
        <position position="425"/>
    </location>
</feature>
<feature type="mutagenesis site" description="Strong decrease in both uptake and excretion activities." evidence="6">
    <original>E</original>
    <variation>A</variation>
    <variation>D</variation>
    <variation>N</variation>
    <variation>Q</variation>
    <location>
        <position position="433"/>
    </location>
</feature>
<reference key="1">
    <citation type="journal article" date="1991" name="J. Biol. Chem.">
        <title>Coexistence of the genes for putrescine transport protein and ornithine decarboxylase at 16 min on Escherichia coli chromosome.</title>
        <authorList>
            <person name="Kashiwagi K."/>
            <person name="Suzuki T."/>
            <person name="Suzuki F."/>
            <person name="Furuchi T."/>
            <person name="Kobayashi H."/>
            <person name="Igarashi K."/>
        </authorList>
    </citation>
    <scope>NUCLEOTIDE SEQUENCE [GENOMIC DNA]</scope>
    <scope>FUNCTION IN PUTRESCINE UPTAKE</scope>
    <scope>SUBCELLULAR LOCATION</scope>
    <scope>OPERON</scope>
    <source>
        <strain>K12 / 3000/ DR112</strain>
    </source>
</reference>
<reference key="2">
    <citation type="journal article" date="1996" name="DNA Res.">
        <title>A 718-kb DNA sequence of the Escherichia coli K-12 genome corresponding to the 12.7-28.0 min region on the linkage map.</title>
        <authorList>
            <person name="Oshima T."/>
            <person name="Aiba H."/>
            <person name="Baba T."/>
            <person name="Fujita K."/>
            <person name="Hayashi K."/>
            <person name="Honjo A."/>
            <person name="Ikemoto K."/>
            <person name="Inada T."/>
            <person name="Itoh T."/>
            <person name="Kajihara M."/>
            <person name="Kanai K."/>
            <person name="Kashimoto K."/>
            <person name="Kimura S."/>
            <person name="Kitagawa M."/>
            <person name="Makino K."/>
            <person name="Masuda S."/>
            <person name="Miki T."/>
            <person name="Mizobuchi K."/>
            <person name="Mori H."/>
            <person name="Motomura K."/>
            <person name="Nakamura Y."/>
            <person name="Nashimoto H."/>
            <person name="Nishio Y."/>
            <person name="Saito N."/>
            <person name="Sampei G."/>
            <person name="Seki Y."/>
            <person name="Tagami H."/>
            <person name="Takemoto K."/>
            <person name="Wada C."/>
            <person name="Yamamoto Y."/>
            <person name="Yano M."/>
            <person name="Horiuchi T."/>
        </authorList>
    </citation>
    <scope>NUCLEOTIDE SEQUENCE [LARGE SCALE GENOMIC DNA]</scope>
    <source>
        <strain>K12 / W3110 / ATCC 27325 / DSM 5911</strain>
    </source>
</reference>
<reference key="3">
    <citation type="journal article" date="1997" name="Science">
        <title>The complete genome sequence of Escherichia coli K-12.</title>
        <authorList>
            <person name="Blattner F.R."/>
            <person name="Plunkett G. III"/>
            <person name="Bloch C.A."/>
            <person name="Perna N.T."/>
            <person name="Burland V."/>
            <person name="Riley M."/>
            <person name="Collado-Vides J."/>
            <person name="Glasner J.D."/>
            <person name="Rode C.K."/>
            <person name="Mayhew G.F."/>
            <person name="Gregor J."/>
            <person name="Davis N.W."/>
            <person name="Kirkpatrick H.A."/>
            <person name="Goeden M.A."/>
            <person name="Rose D.J."/>
            <person name="Mau B."/>
            <person name="Shao Y."/>
        </authorList>
    </citation>
    <scope>NUCLEOTIDE SEQUENCE [LARGE SCALE GENOMIC DNA]</scope>
    <source>
        <strain>K12 / MG1655 / ATCC 47076</strain>
    </source>
</reference>
<reference key="4">
    <citation type="journal article" date="2006" name="Mol. Syst. Biol.">
        <title>Highly accurate genome sequences of Escherichia coli K-12 strains MG1655 and W3110.</title>
        <authorList>
            <person name="Hayashi K."/>
            <person name="Morooka N."/>
            <person name="Yamamoto Y."/>
            <person name="Fujita K."/>
            <person name="Isono K."/>
            <person name="Choi S."/>
            <person name="Ohtsubo E."/>
            <person name="Baba T."/>
            <person name="Wanner B.L."/>
            <person name="Mori H."/>
            <person name="Horiuchi T."/>
        </authorList>
    </citation>
    <scope>NUCLEOTIDE SEQUENCE [LARGE SCALE GENOMIC DNA]</scope>
    <source>
        <strain>K12 / W3110 / ATCC 27325 / DSM 5911</strain>
    </source>
</reference>
<reference key="5">
    <citation type="journal article" date="1992" name="Proc. Natl. Acad. Sci. U.S.A.">
        <title>Excretion of putrescine by the putrescine-ornithine antiporter encoded by the potE gene of Escherichia coli.</title>
        <authorList>
            <person name="Kashiwagi K."/>
            <person name="Miyamoto S."/>
            <person name="Suzuki F."/>
            <person name="Kobayashi H."/>
            <person name="Igarashi K."/>
        </authorList>
    </citation>
    <scope>FUNCTION IN PUTRESCINE EXPORT</scope>
    <scope>CATALYTIC ACTIVITY</scope>
    <scope>ACTIVITY REGULATION</scope>
    <scope>BIOPHYSICOCHEMICAL PROPERTIES</scope>
</reference>
<reference key="6">
    <citation type="journal article" date="1997" name="J. Biol. Chem.">
        <title>Excretion and uptake of putrescine by the PotE protein in Escherichia coli.</title>
        <authorList>
            <person name="Kashiwagi K."/>
            <person name="Shibuya S."/>
            <person name="Tomitori H."/>
            <person name="Kuraishi A."/>
            <person name="Igarashi K."/>
        </authorList>
    </citation>
    <scope>FUNCTION IN PUTRESCINE UPTAKE AND EXPORT</scope>
    <scope>CATALYTIC ACTIVITY</scope>
    <scope>ACTIVITY REGULATION</scope>
    <scope>BIOPHYSICOCHEMICAL PROPERTIES</scope>
    <scope>SUBCELLULAR LOCATION</scope>
    <scope>TOPOLOGY</scope>
    <scope>MUTAGENESIS OF GLU-77; GLU-207 AND GLU-433</scope>
</reference>
<reference key="7">
    <citation type="journal article" date="2000" name="J. Biol. Chem.">
        <title>Identification of the putrescine recognition site on polyamine transport protein PotE.</title>
        <authorList>
            <person name="Kashiwagi K."/>
            <person name="Kuraishi A."/>
            <person name="Tomitori H."/>
            <person name="Igarashi A."/>
            <person name="Nishimura K."/>
            <person name="Shirahata A."/>
            <person name="Igarashi K."/>
        </authorList>
    </citation>
    <scope>SUBUNIT</scope>
    <scope>MUTAGENESIS OF CYS-62; LYS-68; TYR-78; LYS-82; TYR-90; TYR-92; TRP-201; CYS-210; CYS-285; CYS-286; TRP-292; LYS-301; TYR-308; TRP-422 AND TYR-425</scope>
</reference>
<reference key="8">
    <citation type="journal article" date="2005" name="Science">
        <title>Global topology analysis of the Escherichia coli inner membrane proteome.</title>
        <authorList>
            <person name="Daley D.O."/>
            <person name="Rapp M."/>
            <person name="Granseth E."/>
            <person name="Melen K."/>
            <person name="Drew D."/>
            <person name="von Heijne G."/>
        </authorList>
    </citation>
    <scope>SUBCELLULAR LOCATION</scope>
    <scope>TOPOLOGY [LARGE SCALE ANALYSIS]</scope>
    <source>
        <strain>K12 / MG1655 / ATCC 47076</strain>
    </source>
</reference>
<reference key="9">
    <citation type="journal article" date="2012" name="Amino Acids">
        <title>Structure and function of polyamine-amino acid antiporters CadB and PotE in Escherichia coli.</title>
        <authorList>
            <person name="Tomitori H."/>
            <person name="Kashiwagi K."/>
            <person name="Igarashi K."/>
        </authorList>
    </citation>
    <scope>REVIEW</scope>
</reference>